<name>YCAI_ECOLI</name>
<accession>P37443</accession>
<accession>P75841</accession>
<proteinExistence type="predicted"/>
<dbReference type="EMBL" id="U00096">
    <property type="protein sequence ID" value="AAC73999.2"/>
    <property type="molecule type" value="Genomic_DNA"/>
</dbReference>
<dbReference type="EMBL" id="AP009048">
    <property type="protein sequence ID" value="BAA35657.2"/>
    <property type="molecule type" value="Genomic_DNA"/>
</dbReference>
<dbReference type="EMBL" id="Z11796">
    <property type="status" value="NOT_ANNOTATED_CDS"/>
    <property type="molecule type" value="Genomic_DNA"/>
</dbReference>
<dbReference type="PIR" id="H64830">
    <property type="entry name" value="H64830"/>
</dbReference>
<dbReference type="RefSeq" id="NP_415433.4">
    <property type="nucleotide sequence ID" value="NC_000913.3"/>
</dbReference>
<dbReference type="RefSeq" id="WP_000705764.1">
    <property type="nucleotide sequence ID" value="NZ_SSZK01000002.1"/>
</dbReference>
<dbReference type="BioGRID" id="4261065">
    <property type="interactions" value="133"/>
</dbReference>
<dbReference type="FunCoup" id="P37443">
    <property type="interactions" value="402"/>
</dbReference>
<dbReference type="STRING" id="511145.b0913"/>
<dbReference type="PaxDb" id="511145-b0913"/>
<dbReference type="EnsemblBacteria" id="AAC73999">
    <property type="protein sequence ID" value="AAC73999"/>
    <property type="gene ID" value="b0913"/>
</dbReference>
<dbReference type="GeneID" id="945531"/>
<dbReference type="KEGG" id="ecj:JW5120"/>
<dbReference type="KEGG" id="eco:b0913"/>
<dbReference type="KEGG" id="ecoc:C3026_05625"/>
<dbReference type="PATRIC" id="fig|1411691.4.peg.1363"/>
<dbReference type="EchoBASE" id="EB2278"/>
<dbReference type="eggNOG" id="COG0658">
    <property type="taxonomic scope" value="Bacteria"/>
</dbReference>
<dbReference type="eggNOG" id="COG2333">
    <property type="taxonomic scope" value="Bacteria"/>
</dbReference>
<dbReference type="HOGENOM" id="CLU_010363_3_0_6"/>
<dbReference type="InParanoid" id="P37443"/>
<dbReference type="OMA" id="RTDKQGA"/>
<dbReference type="OrthoDB" id="9761531at2"/>
<dbReference type="PhylomeDB" id="P37443"/>
<dbReference type="BioCyc" id="EcoCyc:EG12375-MONOMER"/>
<dbReference type="PRO" id="PR:P37443"/>
<dbReference type="Proteomes" id="UP000000625">
    <property type="component" value="Chromosome"/>
</dbReference>
<dbReference type="GO" id="GO:0005886">
    <property type="term" value="C:plasma membrane"/>
    <property type="evidence" value="ECO:0000314"/>
    <property type="project" value="EcoCyc"/>
</dbReference>
<dbReference type="GO" id="GO:0030420">
    <property type="term" value="P:establishment of competence for transformation"/>
    <property type="evidence" value="ECO:0007669"/>
    <property type="project" value="InterPro"/>
</dbReference>
<dbReference type="CDD" id="cd07731">
    <property type="entry name" value="ComA-like_MBL-fold"/>
    <property type="match status" value="1"/>
</dbReference>
<dbReference type="FunFam" id="3.60.15.10:FF:000036">
    <property type="entry name" value="DNA internalization-related competence protein ComEC/Rec2"/>
    <property type="match status" value="1"/>
</dbReference>
<dbReference type="Gene3D" id="3.60.15.10">
    <property type="entry name" value="Ribonuclease Z/Hydroxyacylglutathione hydrolase-like"/>
    <property type="match status" value="1"/>
</dbReference>
<dbReference type="InterPro" id="IPR035681">
    <property type="entry name" value="ComA-like_MBL"/>
</dbReference>
<dbReference type="InterPro" id="IPR004477">
    <property type="entry name" value="ComEC_N"/>
</dbReference>
<dbReference type="InterPro" id="IPR004797">
    <property type="entry name" value="Competence_ComEC/Rec2"/>
</dbReference>
<dbReference type="InterPro" id="IPR052159">
    <property type="entry name" value="Competence_DNA_uptake"/>
</dbReference>
<dbReference type="InterPro" id="IPR001279">
    <property type="entry name" value="Metallo-B-lactamas"/>
</dbReference>
<dbReference type="InterPro" id="IPR036866">
    <property type="entry name" value="RibonucZ/Hydroxyglut_hydro"/>
</dbReference>
<dbReference type="NCBIfam" id="TIGR00360">
    <property type="entry name" value="ComEC_N-term"/>
    <property type="match status" value="1"/>
</dbReference>
<dbReference type="NCBIfam" id="TIGR00361">
    <property type="entry name" value="ComEC_Rec2"/>
    <property type="match status" value="1"/>
</dbReference>
<dbReference type="NCBIfam" id="NF008580">
    <property type="entry name" value="PRK11539.1"/>
    <property type="match status" value="1"/>
</dbReference>
<dbReference type="PANTHER" id="PTHR30619">
    <property type="entry name" value="DNA INTERNALIZATION/COMPETENCE PROTEIN COMEC/REC2"/>
    <property type="match status" value="1"/>
</dbReference>
<dbReference type="PANTHER" id="PTHR30619:SF1">
    <property type="entry name" value="RECOMBINATION PROTEIN 2"/>
    <property type="match status" value="1"/>
</dbReference>
<dbReference type="Pfam" id="PF03772">
    <property type="entry name" value="Competence"/>
    <property type="match status" value="1"/>
</dbReference>
<dbReference type="Pfam" id="PF00753">
    <property type="entry name" value="Lactamase_B"/>
    <property type="match status" value="1"/>
</dbReference>
<dbReference type="SMART" id="SM00849">
    <property type="entry name" value="Lactamase_B"/>
    <property type="match status" value="1"/>
</dbReference>
<dbReference type="SUPFAM" id="SSF56281">
    <property type="entry name" value="Metallo-hydrolase/oxidoreductase"/>
    <property type="match status" value="1"/>
</dbReference>
<keyword id="KW-1003">Cell membrane</keyword>
<keyword id="KW-0472">Membrane</keyword>
<keyword id="KW-1185">Reference proteome</keyword>
<keyword id="KW-0812">Transmembrane</keyword>
<keyword id="KW-1133">Transmembrane helix</keyword>
<protein>
    <recommendedName>
        <fullName>Uncharacterized protein YcaI</fullName>
    </recommendedName>
</protein>
<evidence type="ECO:0000255" key="1"/>
<evidence type="ECO:0000305" key="2"/>
<reference key="1">
    <citation type="journal article" date="1996" name="DNA Res.">
        <title>A 718-kb DNA sequence of the Escherichia coli K-12 genome corresponding to the 12.7-28.0 min region on the linkage map.</title>
        <authorList>
            <person name="Oshima T."/>
            <person name="Aiba H."/>
            <person name="Baba T."/>
            <person name="Fujita K."/>
            <person name="Hayashi K."/>
            <person name="Honjo A."/>
            <person name="Ikemoto K."/>
            <person name="Inada T."/>
            <person name="Itoh T."/>
            <person name="Kajihara M."/>
            <person name="Kanai K."/>
            <person name="Kashimoto K."/>
            <person name="Kimura S."/>
            <person name="Kitagawa M."/>
            <person name="Makino K."/>
            <person name="Masuda S."/>
            <person name="Miki T."/>
            <person name="Mizobuchi K."/>
            <person name="Mori H."/>
            <person name="Motomura K."/>
            <person name="Nakamura Y."/>
            <person name="Nashimoto H."/>
            <person name="Nishio Y."/>
            <person name="Saito N."/>
            <person name="Sampei G."/>
            <person name="Seki Y."/>
            <person name="Tagami H."/>
            <person name="Takemoto K."/>
            <person name="Wada C."/>
            <person name="Yamamoto Y."/>
            <person name="Yano M."/>
            <person name="Horiuchi T."/>
        </authorList>
    </citation>
    <scope>NUCLEOTIDE SEQUENCE [LARGE SCALE GENOMIC DNA]</scope>
    <source>
        <strain>K12 / W3110 / ATCC 27325 / DSM 5911</strain>
    </source>
</reference>
<reference key="2">
    <citation type="journal article" date="1997" name="Science">
        <title>The complete genome sequence of Escherichia coli K-12.</title>
        <authorList>
            <person name="Blattner F.R."/>
            <person name="Plunkett G. III"/>
            <person name="Bloch C.A."/>
            <person name="Perna N.T."/>
            <person name="Burland V."/>
            <person name="Riley M."/>
            <person name="Collado-Vides J."/>
            <person name="Glasner J.D."/>
            <person name="Rode C.K."/>
            <person name="Mayhew G.F."/>
            <person name="Gregor J."/>
            <person name="Davis N.W."/>
            <person name="Kirkpatrick H.A."/>
            <person name="Goeden M.A."/>
            <person name="Rose D.J."/>
            <person name="Mau B."/>
            <person name="Shao Y."/>
        </authorList>
    </citation>
    <scope>NUCLEOTIDE SEQUENCE [LARGE SCALE GENOMIC DNA]</scope>
    <source>
        <strain>K12 / MG1655 / ATCC 47076</strain>
    </source>
</reference>
<reference key="3">
    <citation type="journal article" date="2006" name="Mol. Syst. Biol.">
        <title>Highly accurate genome sequences of Escherichia coli K-12 strains MG1655 and W3110.</title>
        <authorList>
            <person name="Hayashi K."/>
            <person name="Morooka N."/>
            <person name="Yamamoto Y."/>
            <person name="Fujita K."/>
            <person name="Isono K."/>
            <person name="Choi S."/>
            <person name="Ohtsubo E."/>
            <person name="Baba T."/>
            <person name="Wanner B.L."/>
            <person name="Mori H."/>
            <person name="Horiuchi T."/>
        </authorList>
    </citation>
    <scope>NUCLEOTIDE SEQUENCE [LARGE SCALE GENOMIC DNA]</scope>
    <source>
        <strain>K12 / W3110 / ATCC 27325 / DSM 5911</strain>
    </source>
</reference>
<reference key="4">
    <citation type="journal article" date="1993" name="Mol. Microbiol.">
        <title>The essential Escherichia coli msbA gene, a multicopy suppressor of null mutations in the htrB gene, is related to the universally conserved family of ATP-dependent translocators.</title>
        <authorList>
            <person name="Karow M.L."/>
            <person name="Georgopoulos C."/>
        </authorList>
    </citation>
    <scope>NUCLEOTIDE SEQUENCE [GENOMIC DNA] OF 581-754</scope>
    <source>
        <strain>K12</strain>
    </source>
</reference>
<sequence length="754" mass="84474">MKITTVGVCIISGIFPLLILPQLPGTLTLAFLTLFACVLAFIPVKTVRYIALTLLFFVWGILSAKQILWAGETLTGATQDAIVEITATDGMTTHYGQITHLQGRRIFPASGLVMYGEYLPQAVCAGQQWSMKLKVRAVHGQLNDGGFDSQRYAIAQHQPLTGRFLQASVIEPNCSLRAQYLASLQTTLQPYPWNAVILGLGMGERLSVPKEIKNIMRDTGTAHLMAISGLHIAFAALLAAGLIRSGQIFLPGRWIHWQIPLIGGICCAAFYAWLTGMQPPALRTMVALATWGMLKLSGRQWSGWDVWICCLAAILLMDPVAILSQSLWLSAAAVAALIFWYQWFPCPEWQLPPVLRAVVSLIHLQLGITLLLMPVQIVIFHGISLTSFIANLLAIPLVTFITVPLILAAMVVHLSGPLILEQGLWFLADRSLALLFWGLKSLPEGWINIAECWQWLSFSPWFLLVVWRLNAWRTLPAMCVAGGLLMCWPLWQKPRPDEWQLYMLDVGQGLAMVIARNGKAILYDTGLAWPEGDSGQQLIIPWLHWHNLEPEGVILSHEHLDHRGGLDSILHIWPMLWIRSPLNWEHHQPCVRGEAWQWQGLRFSAHWPLQGSNDKGNNHSCVVKVDDGTNSILLTGDIEAPAEQKMLSRYWQQVQATLLQVPHHGSNTSSSLPLIQRVNGKVALASASRYNAWRLPSNKVKHRYQLQGYQWIDTPHQGQTTVNFSAQGWRISSLREQILPRWYHQWFGVPVDNG</sequence>
<organism>
    <name type="scientific">Escherichia coli (strain K12)</name>
    <dbReference type="NCBI Taxonomy" id="83333"/>
    <lineage>
        <taxon>Bacteria</taxon>
        <taxon>Pseudomonadati</taxon>
        <taxon>Pseudomonadota</taxon>
        <taxon>Gammaproteobacteria</taxon>
        <taxon>Enterobacterales</taxon>
        <taxon>Enterobacteriaceae</taxon>
        <taxon>Escherichia</taxon>
    </lineage>
</organism>
<comment type="subcellular location">
    <subcellularLocation>
        <location evidence="2">Cell membrane</location>
        <topology evidence="2">Multi-pass membrane protein</topology>
    </subcellularLocation>
</comment>
<comment type="similarity">
    <text evidence="2">To B.subtilis ComEC, N.gonorrhoeae ComA, and H.influenzae Rec2.</text>
</comment>
<gene>
    <name type="primary">ycaI</name>
    <name type="ordered locus">b0913</name>
    <name type="ordered locus">JW5120</name>
</gene>
<feature type="chain" id="PRO_0000168754" description="Uncharacterized protein YcaI">
    <location>
        <begin position="1"/>
        <end position="754"/>
    </location>
</feature>
<feature type="transmembrane region" description="Helical" evidence="1">
    <location>
        <begin position="3"/>
        <end position="23"/>
    </location>
</feature>
<feature type="transmembrane region" description="Helical" evidence="1">
    <location>
        <begin position="24"/>
        <end position="44"/>
    </location>
</feature>
<feature type="transmembrane region" description="Helical" evidence="1">
    <location>
        <begin position="50"/>
        <end position="70"/>
    </location>
</feature>
<feature type="transmembrane region" description="Helical" evidence="1">
    <location>
        <begin position="223"/>
        <end position="243"/>
    </location>
</feature>
<feature type="transmembrane region" description="Helical" evidence="1">
    <location>
        <begin position="254"/>
        <end position="274"/>
    </location>
</feature>
<feature type="transmembrane region" description="Helical" evidence="1">
    <location>
        <begin position="320"/>
        <end position="340"/>
    </location>
</feature>
<feature type="transmembrane region" description="Helical" evidence="1">
    <location>
        <begin position="370"/>
        <end position="390"/>
    </location>
</feature>
<feature type="transmembrane region" description="Helical" evidence="1">
    <location>
        <begin position="392"/>
        <end position="412"/>
    </location>
</feature>
<feature type="transmembrane region" description="Helical" evidence="1">
    <location>
        <begin position="446"/>
        <end position="466"/>
    </location>
</feature>
<feature type="transmembrane region" description="Helical" evidence="1">
    <location>
        <begin position="471"/>
        <end position="491"/>
    </location>
</feature>
<feature type="sequence conflict" description="In Ref. 4; Z11796." evidence="2" ref="4">
    <original>PLNWEHHQPCVRGEA</original>
    <variation>SVKLGTSSALCAWRT</variation>
    <location>
        <begin position="581"/>
        <end position="595"/>
    </location>
</feature>